<gene>
    <name evidence="1" type="primary">groES</name>
    <name evidence="1" type="synonym">groS</name>
    <name type="ordered locus">STH2898</name>
</gene>
<evidence type="ECO:0000255" key="1">
    <source>
        <dbReference type="HAMAP-Rule" id="MF_00580"/>
    </source>
</evidence>
<accession>Q67KB7</accession>
<dbReference type="EMBL" id="AP006840">
    <property type="protein sequence ID" value="BAD41881.1"/>
    <property type="molecule type" value="Genomic_DNA"/>
</dbReference>
<dbReference type="RefSeq" id="WP_011197015.1">
    <property type="nucleotide sequence ID" value="NC_006177.1"/>
</dbReference>
<dbReference type="SMR" id="Q67KB7"/>
<dbReference type="STRING" id="292459.STH2898"/>
<dbReference type="KEGG" id="sth:STH2898"/>
<dbReference type="eggNOG" id="COG0234">
    <property type="taxonomic scope" value="Bacteria"/>
</dbReference>
<dbReference type="HOGENOM" id="CLU_132825_2_0_9"/>
<dbReference type="OrthoDB" id="9806791at2"/>
<dbReference type="Proteomes" id="UP000000417">
    <property type="component" value="Chromosome"/>
</dbReference>
<dbReference type="GO" id="GO:0005737">
    <property type="term" value="C:cytoplasm"/>
    <property type="evidence" value="ECO:0007669"/>
    <property type="project" value="UniProtKB-SubCell"/>
</dbReference>
<dbReference type="GO" id="GO:0005524">
    <property type="term" value="F:ATP binding"/>
    <property type="evidence" value="ECO:0007669"/>
    <property type="project" value="InterPro"/>
</dbReference>
<dbReference type="GO" id="GO:0046872">
    <property type="term" value="F:metal ion binding"/>
    <property type="evidence" value="ECO:0007669"/>
    <property type="project" value="TreeGrafter"/>
</dbReference>
<dbReference type="GO" id="GO:0044183">
    <property type="term" value="F:protein folding chaperone"/>
    <property type="evidence" value="ECO:0007669"/>
    <property type="project" value="InterPro"/>
</dbReference>
<dbReference type="GO" id="GO:0051087">
    <property type="term" value="F:protein-folding chaperone binding"/>
    <property type="evidence" value="ECO:0007669"/>
    <property type="project" value="TreeGrafter"/>
</dbReference>
<dbReference type="GO" id="GO:0051082">
    <property type="term" value="F:unfolded protein binding"/>
    <property type="evidence" value="ECO:0007669"/>
    <property type="project" value="TreeGrafter"/>
</dbReference>
<dbReference type="GO" id="GO:0051085">
    <property type="term" value="P:chaperone cofactor-dependent protein refolding"/>
    <property type="evidence" value="ECO:0007669"/>
    <property type="project" value="TreeGrafter"/>
</dbReference>
<dbReference type="CDD" id="cd00320">
    <property type="entry name" value="cpn10"/>
    <property type="match status" value="1"/>
</dbReference>
<dbReference type="FunFam" id="2.30.33.40:FF:000001">
    <property type="entry name" value="10 kDa chaperonin"/>
    <property type="match status" value="1"/>
</dbReference>
<dbReference type="Gene3D" id="2.30.33.40">
    <property type="entry name" value="GroES chaperonin"/>
    <property type="match status" value="1"/>
</dbReference>
<dbReference type="HAMAP" id="MF_00580">
    <property type="entry name" value="CH10"/>
    <property type="match status" value="1"/>
</dbReference>
<dbReference type="InterPro" id="IPR020818">
    <property type="entry name" value="Chaperonin_GroES"/>
</dbReference>
<dbReference type="InterPro" id="IPR037124">
    <property type="entry name" value="Chaperonin_GroES_sf"/>
</dbReference>
<dbReference type="InterPro" id="IPR011032">
    <property type="entry name" value="GroES-like_sf"/>
</dbReference>
<dbReference type="NCBIfam" id="NF001527">
    <property type="entry name" value="PRK00364.1-2"/>
    <property type="match status" value="1"/>
</dbReference>
<dbReference type="NCBIfam" id="NF001530">
    <property type="entry name" value="PRK00364.1-6"/>
    <property type="match status" value="1"/>
</dbReference>
<dbReference type="NCBIfam" id="NF001531">
    <property type="entry name" value="PRK00364.2-2"/>
    <property type="match status" value="1"/>
</dbReference>
<dbReference type="NCBIfam" id="NF001533">
    <property type="entry name" value="PRK00364.2-4"/>
    <property type="match status" value="1"/>
</dbReference>
<dbReference type="NCBIfam" id="NF001534">
    <property type="entry name" value="PRK00364.2-5"/>
    <property type="match status" value="1"/>
</dbReference>
<dbReference type="PANTHER" id="PTHR10772">
    <property type="entry name" value="10 KDA HEAT SHOCK PROTEIN"/>
    <property type="match status" value="1"/>
</dbReference>
<dbReference type="PANTHER" id="PTHR10772:SF58">
    <property type="entry name" value="CO-CHAPERONIN GROES"/>
    <property type="match status" value="1"/>
</dbReference>
<dbReference type="Pfam" id="PF00166">
    <property type="entry name" value="Cpn10"/>
    <property type="match status" value="1"/>
</dbReference>
<dbReference type="PRINTS" id="PR00297">
    <property type="entry name" value="CHAPERONIN10"/>
</dbReference>
<dbReference type="SMART" id="SM00883">
    <property type="entry name" value="Cpn10"/>
    <property type="match status" value="1"/>
</dbReference>
<dbReference type="SUPFAM" id="SSF50129">
    <property type="entry name" value="GroES-like"/>
    <property type="match status" value="1"/>
</dbReference>
<feature type="chain" id="PRO_0000174874" description="Co-chaperonin GroES">
    <location>
        <begin position="1"/>
        <end position="97"/>
    </location>
</feature>
<comment type="function">
    <text evidence="1">Together with the chaperonin GroEL, plays an essential role in assisting protein folding. The GroEL-GroES system forms a nano-cage that allows encapsulation of the non-native substrate proteins and provides a physical environment optimized to promote and accelerate protein folding. GroES binds to the apical surface of the GroEL ring, thereby capping the opening of the GroEL channel.</text>
</comment>
<comment type="subunit">
    <text evidence="1">Heptamer of 7 subunits arranged in a ring. Interacts with the chaperonin GroEL.</text>
</comment>
<comment type="subcellular location">
    <subcellularLocation>
        <location evidence="1">Cytoplasm</location>
    </subcellularLocation>
</comment>
<comment type="similarity">
    <text evidence="1">Belongs to the GroES chaperonin family.</text>
</comment>
<reference key="1">
    <citation type="journal article" date="2004" name="Nucleic Acids Res.">
        <title>Genome sequence of Symbiobacterium thermophilum, an uncultivable bacterium that depends on microbial commensalism.</title>
        <authorList>
            <person name="Ueda K."/>
            <person name="Yamashita A."/>
            <person name="Ishikawa J."/>
            <person name="Shimada M."/>
            <person name="Watsuji T."/>
            <person name="Morimura K."/>
            <person name="Ikeda H."/>
            <person name="Hattori M."/>
            <person name="Beppu T."/>
        </authorList>
    </citation>
    <scope>NUCLEOTIDE SEQUENCE [LARGE SCALE GENOMIC DNA]</scope>
    <source>
        <strain>DSM 24528 / JCM 14929 / IAM 14863 / T</strain>
    </source>
</reference>
<sequence>MNVKPLGARVVIKPLEKEERTKSGIVLPDTAKEKPQQGKVIAVGPGRTLESGTKVELEVKEGDTVIFSKYAGTEVKIDGEEYIILDGERDILAIVQG</sequence>
<name>CH10_SYMTH</name>
<proteinExistence type="inferred from homology"/>
<protein>
    <recommendedName>
        <fullName evidence="1">Co-chaperonin GroES</fullName>
    </recommendedName>
    <alternativeName>
        <fullName evidence="1">10 kDa chaperonin</fullName>
    </alternativeName>
    <alternativeName>
        <fullName evidence="1">Chaperonin-10</fullName>
        <shortName evidence="1">Cpn10</shortName>
    </alternativeName>
</protein>
<keyword id="KW-0143">Chaperone</keyword>
<keyword id="KW-0963">Cytoplasm</keyword>
<keyword id="KW-1185">Reference proteome</keyword>
<organism>
    <name type="scientific">Symbiobacterium thermophilum (strain DSM 24528 / JCM 14929 / IAM 14863 / T)</name>
    <dbReference type="NCBI Taxonomy" id="292459"/>
    <lineage>
        <taxon>Bacteria</taxon>
        <taxon>Bacillati</taxon>
        <taxon>Bacillota</taxon>
        <taxon>Clostridia</taxon>
        <taxon>Eubacteriales</taxon>
        <taxon>Symbiobacteriaceae</taxon>
        <taxon>Symbiobacterium</taxon>
    </lineage>
</organism>